<proteinExistence type="inferred from homology"/>
<name>ISPF_PHOV8</name>
<comment type="function">
    <text evidence="1">Involved in the biosynthesis of isopentenyl diphosphate (IPP) and dimethylallyl diphosphate (DMAPP), two major building blocks of isoprenoid compounds. Catalyzes the conversion of 4-diphosphocytidyl-2-C-methyl-D-erythritol 2-phosphate (CDP-ME2P) to 2-C-methyl-D-erythritol 2,4-cyclodiphosphate (ME-CPP) with a corresponding release of cytidine 5-monophosphate (CMP).</text>
</comment>
<comment type="catalytic activity">
    <reaction evidence="1">
        <text>4-CDP-2-C-methyl-D-erythritol 2-phosphate = 2-C-methyl-D-erythritol 2,4-cyclic diphosphate + CMP</text>
        <dbReference type="Rhea" id="RHEA:23864"/>
        <dbReference type="ChEBI" id="CHEBI:57919"/>
        <dbReference type="ChEBI" id="CHEBI:58483"/>
        <dbReference type="ChEBI" id="CHEBI:60377"/>
        <dbReference type="EC" id="4.6.1.12"/>
    </reaction>
</comment>
<comment type="cofactor">
    <cofactor evidence="1">
        <name>a divalent metal cation</name>
        <dbReference type="ChEBI" id="CHEBI:60240"/>
    </cofactor>
    <text evidence="1">Binds 1 divalent metal cation per subunit.</text>
</comment>
<comment type="pathway">
    <text evidence="1">Isoprenoid biosynthesis; isopentenyl diphosphate biosynthesis via DXP pathway; isopentenyl diphosphate from 1-deoxy-D-xylulose 5-phosphate: step 4/6.</text>
</comment>
<comment type="subunit">
    <text evidence="1">Homotrimer.</text>
</comment>
<comment type="similarity">
    <text evidence="1">Belongs to the IspF family.</text>
</comment>
<protein>
    <recommendedName>
        <fullName evidence="1">2-C-methyl-D-erythritol 2,4-cyclodiphosphate synthase</fullName>
        <shortName evidence="1">MECDP-synthase</shortName>
        <shortName evidence="1">MECPP-synthase</shortName>
        <shortName evidence="1">MECPS</shortName>
        <ecNumber evidence="1">4.6.1.12</ecNumber>
    </recommendedName>
</protein>
<dbReference type="EC" id="4.6.1.12" evidence="1"/>
<dbReference type="EMBL" id="CP000139">
    <property type="protein sequence ID" value="ABR39320.1"/>
    <property type="molecule type" value="Genomic_DNA"/>
</dbReference>
<dbReference type="RefSeq" id="WP_005839209.1">
    <property type="nucleotide sequence ID" value="NZ_JANSWM010000064.1"/>
</dbReference>
<dbReference type="SMR" id="A6L0V6"/>
<dbReference type="STRING" id="435590.BVU_1639"/>
<dbReference type="PaxDb" id="435590-BVU_1639"/>
<dbReference type="GeneID" id="5302605"/>
<dbReference type="KEGG" id="bvu:BVU_1639"/>
<dbReference type="eggNOG" id="COG0245">
    <property type="taxonomic scope" value="Bacteria"/>
</dbReference>
<dbReference type="HOGENOM" id="CLU_084630_2_0_10"/>
<dbReference type="BioCyc" id="BVUL435590:G1G59-1724-MONOMER"/>
<dbReference type="UniPathway" id="UPA00056">
    <property type="reaction ID" value="UER00095"/>
</dbReference>
<dbReference type="Proteomes" id="UP000002861">
    <property type="component" value="Chromosome"/>
</dbReference>
<dbReference type="GO" id="GO:0008685">
    <property type="term" value="F:2-C-methyl-D-erythritol 2,4-cyclodiphosphate synthase activity"/>
    <property type="evidence" value="ECO:0007669"/>
    <property type="project" value="UniProtKB-UniRule"/>
</dbReference>
<dbReference type="GO" id="GO:0046872">
    <property type="term" value="F:metal ion binding"/>
    <property type="evidence" value="ECO:0007669"/>
    <property type="project" value="UniProtKB-KW"/>
</dbReference>
<dbReference type="GO" id="GO:0019288">
    <property type="term" value="P:isopentenyl diphosphate biosynthetic process, methylerythritol 4-phosphate pathway"/>
    <property type="evidence" value="ECO:0007669"/>
    <property type="project" value="UniProtKB-UniRule"/>
</dbReference>
<dbReference type="GO" id="GO:0016114">
    <property type="term" value="P:terpenoid biosynthetic process"/>
    <property type="evidence" value="ECO:0007669"/>
    <property type="project" value="InterPro"/>
</dbReference>
<dbReference type="CDD" id="cd00554">
    <property type="entry name" value="MECDP_synthase"/>
    <property type="match status" value="1"/>
</dbReference>
<dbReference type="FunFam" id="3.30.1330.50:FF:000001">
    <property type="entry name" value="2-C-methyl-D-erythritol 2,4-cyclodiphosphate synthase"/>
    <property type="match status" value="1"/>
</dbReference>
<dbReference type="Gene3D" id="3.30.1330.50">
    <property type="entry name" value="2-C-methyl-D-erythritol 2,4-cyclodiphosphate synthase"/>
    <property type="match status" value="1"/>
</dbReference>
<dbReference type="HAMAP" id="MF_00107">
    <property type="entry name" value="IspF"/>
    <property type="match status" value="1"/>
</dbReference>
<dbReference type="InterPro" id="IPR003526">
    <property type="entry name" value="MECDP_synthase"/>
</dbReference>
<dbReference type="InterPro" id="IPR020555">
    <property type="entry name" value="MECDP_synthase_CS"/>
</dbReference>
<dbReference type="InterPro" id="IPR036571">
    <property type="entry name" value="MECDP_synthase_sf"/>
</dbReference>
<dbReference type="NCBIfam" id="TIGR00151">
    <property type="entry name" value="ispF"/>
    <property type="match status" value="1"/>
</dbReference>
<dbReference type="PANTHER" id="PTHR43181">
    <property type="entry name" value="2-C-METHYL-D-ERYTHRITOL 2,4-CYCLODIPHOSPHATE SYNTHASE, CHLOROPLASTIC"/>
    <property type="match status" value="1"/>
</dbReference>
<dbReference type="PANTHER" id="PTHR43181:SF1">
    <property type="entry name" value="2-C-METHYL-D-ERYTHRITOL 2,4-CYCLODIPHOSPHATE SYNTHASE, CHLOROPLASTIC"/>
    <property type="match status" value="1"/>
</dbReference>
<dbReference type="Pfam" id="PF02542">
    <property type="entry name" value="YgbB"/>
    <property type="match status" value="1"/>
</dbReference>
<dbReference type="SUPFAM" id="SSF69765">
    <property type="entry name" value="IpsF-like"/>
    <property type="match status" value="1"/>
</dbReference>
<dbReference type="PROSITE" id="PS01350">
    <property type="entry name" value="ISPF"/>
    <property type="match status" value="1"/>
</dbReference>
<keyword id="KW-0414">Isoprene biosynthesis</keyword>
<keyword id="KW-0456">Lyase</keyword>
<keyword id="KW-0479">Metal-binding</keyword>
<feature type="chain" id="PRO_1000022808" description="2-C-methyl-D-erythritol 2,4-cyclodiphosphate synthase">
    <location>
        <begin position="1"/>
        <end position="160"/>
    </location>
</feature>
<feature type="binding site" evidence="1">
    <location>
        <begin position="10"/>
        <end position="12"/>
    </location>
    <ligand>
        <name>4-CDP-2-C-methyl-D-erythritol 2-phosphate</name>
        <dbReference type="ChEBI" id="CHEBI:57919"/>
    </ligand>
</feature>
<feature type="binding site" evidence="1">
    <location>
        <position position="10"/>
    </location>
    <ligand>
        <name>a divalent metal cation</name>
        <dbReference type="ChEBI" id="CHEBI:60240"/>
    </ligand>
</feature>
<feature type="binding site" evidence="1">
    <location>
        <position position="12"/>
    </location>
    <ligand>
        <name>a divalent metal cation</name>
        <dbReference type="ChEBI" id="CHEBI:60240"/>
    </ligand>
</feature>
<feature type="binding site" evidence="1">
    <location>
        <begin position="36"/>
        <end position="37"/>
    </location>
    <ligand>
        <name>4-CDP-2-C-methyl-D-erythritol 2-phosphate</name>
        <dbReference type="ChEBI" id="CHEBI:57919"/>
    </ligand>
</feature>
<feature type="binding site" evidence="1">
    <location>
        <position position="44"/>
    </location>
    <ligand>
        <name>a divalent metal cation</name>
        <dbReference type="ChEBI" id="CHEBI:60240"/>
    </ligand>
</feature>
<feature type="binding site" evidence="1">
    <location>
        <begin position="58"/>
        <end position="60"/>
    </location>
    <ligand>
        <name>4-CDP-2-C-methyl-D-erythritol 2-phosphate</name>
        <dbReference type="ChEBI" id="CHEBI:57919"/>
    </ligand>
</feature>
<feature type="binding site" evidence="1">
    <location>
        <begin position="134"/>
        <end position="137"/>
    </location>
    <ligand>
        <name>4-CDP-2-C-methyl-D-erythritol 2-phosphate</name>
        <dbReference type="ChEBI" id="CHEBI:57919"/>
    </ligand>
</feature>
<feature type="binding site" evidence="1">
    <location>
        <position position="141"/>
    </location>
    <ligand>
        <name>4-CDP-2-C-methyl-D-erythritol 2-phosphate</name>
        <dbReference type="ChEBI" id="CHEBI:57919"/>
    </ligand>
</feature>
<feature type="binding site" evidence="1">
    <location>
        <position position="144"/>
    </location>
    <ligand>
        <name>4-CDP-2-C-methyl-D-erythritol 2-phosphate</name>
        <dbReference type="ChEBI" id="CHEBI:57919"/>
    </ligand>
</feature>
<feature type="site" description="Transition state stabilizer" evidence="1">
    <location>
        <position position="36"/>
    </location>
</feature>
<feature type="site" description="Transition state stabilizer" evidence="1">
    <location>
        <position position="135"/>
    </location>
</feature>
<evidence type="ECO:0000255" key="1">
    <source>
        <dbReference type="HAMAP-Rule" id="MF_00107"/>
    </source>
</evidence>
<gene>
    <name evidence="1" type="primary">ispF</name>
    <name type="ordered locus">BVU_1639</name>
</gene>
<organism>
    <name type="scientific">Phocaeicola vulgatus (strain ATCC 8482 / DSM 1447 / JCM 5826 / CCUG 4940 / NBRC 14291 / NCTC 11154)</name>
    <name type="common">Bacteroides vulgatus</name>
    <dbReference type="NCBI Taxonomy" id="435590"/>
    <lineage>
        <taxon>Bacteria</taxon>
        <taxon>Pseudomonadati</taxon>
        <taxon>Bacteroidota</taxon>
        <taxon>Bacteroidia</taxon>
        <taxon>Bacteroidales</taxon>
        <taxon>Bacteroidaceae</taxon>
        <taxon>Phocaeicola</taxon>
    </lineage>
</organism>
<accession>A6L0V6</accession>
<sequence length="160" mass="17474">MKIRVGFGFDVHQLVTGRELWLGGIKFEHELGLLGHSDADVLIHAICDALLGAANMRDIGYHFPDTAGEFKNIDSKILLAETVDLIAAKGYKVGNVDATICAERPKLKARIPEMQLVLAHLMRIDVDDVSVKATTTEKLGFTGREEGISAYATVLIEKAE</sequence>
<reference key="1">
    <citation type="journal article" date="2007" name="PLoS Biol.">
        <title>Evolution of symbiotic bacteria in the distal human intestine.</title>
        <authorList>
            <person name="Xu J."/>
            <person name="Mahowald M.A."/>
            <person name="Ley R.E."/>
            <person name="Lozupone C.A."/>
            <person name="Hamady M."/>
            <person name="Martens E.C."/>
            <person name="Henrissat B."/>
            <person name="Coutinho P.M."/>
            <person name="Minx P."/>
            <person name="Latreille P."/>
            <person name="Cordum H."/>
            <person name="Van Brunt A."/>
            <person name="Kim K."/>
            <person name="Fulton R.S."/>
            <person name="Fulton L.A."/>
            <person name="Clifton S.W."/>
            <person name="Wilson R.K."/>
            <person name="Knight R.D."/>
            <person name="Gordon J.I."/>
        </authorList>
    </citation>
    <scope>NUCLEOTIDE SEQUENCE [LARGE SCALE GENOMIC DNA]</scope>
    <source>
        <strain>ATCC 8482 / DSM 1447 / JCM 5826 / CCUG 4940 / NBRC 14291 / NCTC 11154</strain>
    </source>
</reference>